<feature type="chain" id="PRO_1000120031" description="ATP-dependent 6-phosphofructokinase">
    <location>
        <begin position="1"/>
        <end position="319"/>
    </location>
</feature>
<feature type="active site" description="Proton acceptor" evidence="1">
    <location>
        <position position="127"/>
    </location>
</feature>
<feature type="binding site" evidence="1">
    <location>
        <position position="11"/>
    </location>
    <ligand>
        <name>ATP</name>
        <dbReference type="ChEBI" id="CHEBI:30616"/>
    </ligand>
</feature>
<feature type="binding site" evidence="1">
    <location>
        <begin position="21"/>
        <end position="25"/>
    </location>
    <ligand>
        <name>ADP</name>
        <dbReference type="ChEBI" id="CHEBI:456216"/>
        <note>allosteric activator; ligand shared between dimeric partners</note>
    </ligand>
</feature>
<feature type="binding site" evidence="1">
    <location>
        <begin position="72"/>
        <end position="73"/>
    </location>
    <ligand>
        <name>ATP</name>
        <dbReference type="ChEBI" id="CHEBI:30616"/>
    </ligand>
</feature>
<feature type="binding site" evidence="1">
    <location>
        <begin position="102"/>
        <end position="105"/>
    </location>
    <ligand>
        <name>ATP</name>
        <dbReference type="ChEBI" id="CHEBI:30616"/>
    </ligand>
</feature>
<feature type="binding site" evidence="1">
    <location>
        <position position="103"/>
    </location>
    <ligand>
        <name>Mg(2+)</name>
        <dbReference type="ChEBI" id="CHEBI:18420"/>
        <note>catalytic</note>
    </ligand>
</feature>
<feature type="binding site" description="in other chain" evidence="1">
    <location>
        <begin position="125"/>
        <end position="127"/>
    </location>
    <ligand>
        <name>substrate</name>
        <note>ligand shared between dimeric partners</note>
    </ligand>
</feature>
<feature type="binding site" description="in other chain" evidence="1">
    <location>
        <position position="154"/>
    </location>
    <ligand>
        <name>ADP</name>
        <dbReference type="ChEBI" id="CHEBI:456216"/>
        <note>allosteric activator; ligand shared between dimeric partners</note>
    </ligand>
</feature>
<feature type="binding site" evidence="1">
    <location>
        <position position="162"/>
    </location>
    <ligand>
        <name>substrate</name>
        <note>ligand shared between dimeric partners</note>
    </ligand>
</feature>
<feature type="binding site" description="in other chain" evidence="1">
    <location>
        <begin position="169"/>
        <end position="171"/>
    </location>
    <ligand>
        <name>substrate</name>
        <note>ligand shared between dimeric partners</note>
    </ligand>
</feature>
<feature type="binding site" description="in other chain" evidence="1">
    <location>
        <begin position="185"/>
        <end position="187"/>
    </location>
    <ligand>
        <name>ADP</name>
        <dbReference type="ChEBI" id="CHEBI:456216"/>
        <note>allosteric activator; ligand shared between dimeric partners</note>
    </ligand>
</feature>
<feature type="binding site" description="in other chain" evidence="1">
    <location>
        <position position="211"/>
    </location>
    <ligand>
        <name>ADP</name>
        <dbReference type="ChEBI" id="CHEBI:456216"/>
        <note>allosteric activator; ligand shared between dimeric partners</note>
    </ligand>
</feature>
<feature type="binding site" description="in other chain" evidence="1">
    <location>
        <begin position="213"/>
        <end position="215"/>
    </location>
    <ligand>
        <name>ADP</name>
        <dbReference type="ChEBI" id="CHEBI:456216"/>
        <note>allosteric activator; ligand shared between dimeric partners</note>
    </ligand>
</feature>
<feature type="binding site" description="in other chain" evidence="1">
    <location>
        <position position="222"/>
    </location>
    <ligand>
        <name>substrate</name>
        <note>ligand shared between dimeric partners</note>
    </ligand>
</feature>
<feature type="binding site" evidence="1">
    <location>
        <position position="243"/>
    </location>
    <ligand>
        <name>substrate</name>
        <note>ligand shared between dimeric partners</note>
    </ligand>
</feature>
<feature type="binding site" description="in other chain" evidence="1">
    <location>
        <begin position="249"/>
        <end position="252"/>
    </location>
    <ligand>
        <name>substrate</name>
        <note>ligand shared between dimeric partners</note>
    </ligand>
</feature>
<reference key="1">
    <citation type="journal article" date="2008" name="Chem. Biol. Interact.">
        <title>Extending the Bacillus cereus group genomics to putative food-borne pathogens of different toxicity.</title>
        <authorList>
            <person name="Lapidus A."/>
            <person name="Goltsman E."/>
            <person name="Auger S."/>
            <person name="Galleron N."/>
            <person name="Segurens B."/>
            <person name="Dossat C."/>
            <person name="Land M.L."/>
            <person name="Broussolle V."/>
            <person name="Brillard J."/>
            <person name="Guinebretiere M.-H."/>
            <person name="Sanchis V."/>
            <person name="Nguen-the C."/>
            <person name="Lereclus D."/>
            <person name="Richardson P."/>
            <person name="Wincker P."/>
            <person name="Weissenbach J."/>
            <person name="Ehrlich S.D."/>
            <person name="Sorokin A."/>
        </authorList>
    </citation>
    <scope>NUCLEOTIDE SEQUENCE [LARGE SCALE GENOMIC DNA]</scope>
    <source>
        <strain>KBAB4</strain>
    </source>
</reference>
<organism>
    <name type="scientific">Bacillus mycoides (strain KBAB4)</name>
    <name type="common">Bacillus weihenstephanensis</name>
    <dbReference type="NCBI Taxonomy" id="315730"/>
    <lineage>
        <taxon>Bacteria</taxon>
        <taxon>Bacillati</taxon>
        <taxon>Bacillota</taxon>
        <taxon>Bacilli</taxon>
        <taxon>Bacillales</taxon>
        <taxon>Bacillaceae</taxon>
        <taxon>Bacillus</taxon>
        <taxon>Bacillus cereus group</taxon>
    </lineage>
</organism>
<proteinExistence type="inferred from homology"/>
<sequence length="319" mass="34265">MKRIGVLTSGGDSPGMNAAIRAVVRKAIFHDIEVYGIYHGYAGLISGHIEKLELGSVGDIIHRGGTKLYTARCPEFKDPEVRLKGIEQLKKHGIEGLVVIGGDGSYQGAKKLTEQGFPCVGVPGTIDNDIPGTDFTIGFDTALNTVIDAIDKIRDTATSHERTYVIEVMGRHAGDIALWAGLADGAETILIPEEKYDMEDVIARLKRGSERGKKHSIIVVAEGVGSAIDIGKHIEEATSFDTRVTVLGHVQRGGSPSAQDRVLASRLGARAVELLIAGNGGRCVGIQNNKLVDHDIIEALAQKHTIDKDMYQLSKELSI</sequence>
<name>PFKA_BACMK</name>
<dbReference type="EC" id="2.7.1.11" evidence="1"/>
<dbReference type="EMBL" id="CP000903">
    <property type="protein sequence ID" value="ABY45588.1"/>
    <property type="molecule type" value="Genomic_DNA"/>
</dbReference>
<dbReference type="RefSeq" id="WP_002034288.1">
    <property type="nucleotide sequence ID" value="NZ_CAKMRX030000126.1"/>
</dbReference>
<dbReference type="SMR" id="A9VJR1"/>
<dbReference type="GeneID" id="66265845"/>
<dbReference type="KEGG" id="bwe:BcerKBAB4_4429"/>
<dbReference type="eggNOG" id="COG0205">
    <property type="taxonomic scope" value="Bacteria"/>
</dbReference>
<dbReference type="HOGENOM" id="CLU_020655_0_1_9"/>
<dbReference type="UniPathway" id="UPA00109">
    <property type="reaction ID" value="UER00182"/>
</dbReference>
<dbReference type="Proteomes" id="UP000002154">
    <property type="component" value="Chromosome"/>
</dbReference>
<dbReference type="GO" id="GO:0005737">
    <property type="term" value="C:cytoplasm"/>
    <property type="evidence" value="ECO:0007669"/>
    <property type="project" value="UniProtKB-SubCell"/>
</dbReference>
<dbReference type="GO" id="GO:0003872">
    <property type="term" value="F:6-phosphofructokinase activity"/>
    <property type="evidence" value="ECO:0007669"/>
    <property type="project" value="UniProtKB-UniRule"/>
</dbReference>
<dbReference type="GO" id="GO:0005524">
    <property type="term" value="F:ATP binding"/>
    <property type="evidence" value="ECO:0007669"/>
    <property type="project" value="UniProtKB-KW"/>
</dbReference>
<dbReference type="GO" id="GO:0046872">
    <property type="term" value="F:metal ion binding"/>
    <property type="evidence" value="ECO:0007669"/>
    <property type="project" value="UniProtKB-KW"/>
</dbReference>
<dbReference type="GO" id="GO:0006002">
    <property type="term" value="P:fructose 6-phosphate metabolic process"/>
    <property type="evidence" value="ECO:0007669"/>
    <property type="project" value="InterPro"/>
</dbReference>
<dbReference type="CDD" id="cd00763">
    <property type="entry name" value="Bacterial_PFK"/>
    <property type="match status" value="1"/>
</dbReference>
<dbReference type="FunFam" id="3.40.50.450:FF:000001">
    <property type="entry name" value="ATP-dependent 6-phosphofructokinase"/>
    <property type="match status" value="1"/>
</dbReference>
<dbReference type="FunFam" id="3.40.50.460:FF:000002">
    <property type="entry name" value="ATP-dependent 6-phosphofructokinase"/>
    <property type="match status" value="1"/>
</dbReference>
<dbReference type="Gene3D" id="3.40.50.450">
    <property type="match status" value="1"/>
</dbReference>
<dbReference type="Gene3D" id="3.40.50.460">
    <property type="entry name" value="Phosphofructokinase domain"/>
    <property type="match status" value="1"/>
</dbReference>
<dbReference type="HAMAP" id="MF_00339">
    <property type="entry name" value="Phosphofructokinase_I_B1"/>
    <property type="match status" value="1"/>
</dbReference>
<dbReference type="InterPro" id="IPR022953">
    <property type="entry name" value="ATP_PFK"/>
</dbReference>
<dbReference type="InterPro" id="IPR012003">
    <property type="entry name" value="ATP_PFK_prok-type"/>
</dbReference>
<dbReference type="InterPro" id="IPR012828">
    <property type="entry name" value="PFKA_ATP_prok"/>
</dbReference>
<dbReference type="InterPro" id="IPR015912">
    <property type="entry name" value="Phosphofructokinase_CS"/>
</dbReference>
<dbReference type="InterPro" id="IPR000023">
    <property type="entry name" value="Phosphofructokinase_dom"/>
</dbReference>
<dbReference type="InterPro" id="IPR035966">
    <property type="entry name" value="PKF_sf"/>
</dbReference>
<dbReference type="NCBIfam" id="TIGR02482">
    <property type="entry name" value="PFKA_ATP"/>
    <property type="match status" value="1"/>
</dbReference>
<dbReference type="NCBIfam" id="NF002872">
    <property type="entry name" value="PRK03202.1"/>
    <property type="match status" value="1"/>
</dbReference>
<dbReference type="Pfam" id="PF00365">
    <property type="entry name" value="PFK"/>
    <property type="match status" value="1"/>
</dbReference>
<dbReference type="PIRSF" id="PIRSF000532">
    <property type="entry name" value="ATP_PFK_prok"/>
    <property type="match status" value="1"/>
</dbReference>
<dbReference type="PRINTS" id="PR00476">
    <property type="entry name" value="PHFRCTKINASE"/>
</dbReference>
<dbReference type="SUPFAM" id="SSF53784">
    <property type="entry name" value="Phosphofructokinase"/>
    <property type="match status" value="1"/>
</dbReference>
<dbReference type="PROSITE" id="PS00433">
    <property type="entry name" value="PHOSPHOFRUCTOKINASE"/>
    <property type="match status" value="1"/>
</dbReference>
<evidence type="ECO:0000255" key="1">
    <source>
        <dbReference type="HAMAP-Rule" id="MF_00339"/>
    </source>
</evidence>
<comment type="function">
    <text evidence="1">Catalyzes the phosphorylation of D-fructose 6-phosphate to fructose 1,6-bisphosphate by ATP, the first committing step of glycolysis.</text>
</comment>
<comment type="catalytic activity">
    <reaction evidence="1">
        <text>beta-D-fructose 6-phosphate + ATP = beta-D-fructose 1,6-bisphosphate + ADP + H(+)</text>
        <dbReference type="Rhea" id="RHEA:16109"/>
        <dbReference type="ChEBI" id="CHEBI:15378"/>
        <dbReference type="ChEBI" id="CHEBI:30616"/>
        <dbReference type="ChEBI" id="CHEBI:32966"/>
        <dbReference type="ChEBI" id="CHEBI:57634"/>
        <dbReference type="ChEBI" id="CHEBI:456216"/>
        <dbReference type="EC" id="2.7.1.11"/>
    </reaction>
</comment>
<comment type="cofactor">
    <cofactor evidence="1">
        <name>Mg(2+)</name>
        <dbReference type="ChEBI" id="CHEBI:18420"/>
    </cofactor>
</comment>
<comment type="activity regulation">
    <text evidence="1">Allosterically activated by ADP and other diphosphonucleosides, and allosterically inhibited by phosphoenolpyruvate.</text>
</comment>
<comment type="pathway">
    <text evidence="1">Carbohydrate degradation; glycolysis; D-glyceraldehyde 3-phosphate and glycerone phosphate from D-glucose: step 3/4.</text>
</comment>
<comment type="subunit">
    <text evidence="1">Homotetramer.</text>
</comment>
<comment type="subcellular location">
    <subcellularLocation>
        <location evidence="1">Cytoplasm</location>
    </subcellularLocation>
</comment>
<comment type="similarity">
    <text evidence="1">Belongs to the phosphofructokinase type A (PFKA) family. ATP-dependent PFK group I subfamily. Prokaryotic clade 'B1' sub-subfamily.</text>
</comment>
<accession>A9VJR1</accession>
<gene>
    <name evidence="1" type="primary">pfkA</name>
    <name type="ordered locus">BcerKBAB4_4429</name>
</gene>
<protein>
    <recommendedName>
        <fullName evidence="1">ATP-dependent 6-phosphofructokinase</fullName>
        <shortName evidence="1">ATP-PFK</shortName>
        <shortName evidence="1">Phosphofructokinase</shortName>
        <ecNumber evidence="1">2.7.1.11</ecNumber>
    </recommendedName>
    <alternativeName>
        <fullName evidence="1">Phosphohexokinase</fullName>
    </alternativeName>
</protein>
<keyword id="KW-0021">Allosteric enzyme</keyword>
<keyword id="KW-0067">ATP-binding</keyword>
<keyword id="KW-0963">Cytoplasm</keyword>
<keyword id="KW-0324">Glycolysis</keyword>
<keyword id="KW-0418">Kinase</keyword>
<keyword id="KW-0460">Magnesium</keyword>
<keyword id="KW-0479">Metal-binding</keyword>
<keyword id="KW-0547">Nucleotide-binding</keyword>
<keyword id="KW-0808">Transferase</keyword>